<proteinExistence type="inferred from homology"/>
<gene>
    <name type="primary">gnpTA</name>
    <name type="ordered locus">Saci_0093</name>
</gene>
<comment type="catalytic activity">
    <reaction>
        <text>a di-trans,poly-cis-dolichyl phosphate + UDP-N-acetyl-alpha-D-glucosamine = an N-acetyl-alpha-D-glucosaminyl-diphospho-di-trans,poly-cis-dolichol + UMP</text>
        <dbReference type="Rhea" id="RHEA:13289"/>
        <dbReference type="Rhea" id="RHEA-COMP:19498"/>
        <dbReference type="Rhea" id="RHEA-COMP:19507"/>
        <dbReference type="ChEBI" id="CHEBI:57683"/>
        <dbReference type="ChEBI" id="CHEBI:57705"/>
        <dbReference type="ChEBI" id="CHEBI:57865"/>
        <dbReference type="ChEBI" id="CHEBI:58427"/>
        <dbReference type="EC" id="2.7.8.15"/>
    </reaction>
</comment>
<comment type="activity regulation">
    <text evidence="1">Inhibited by tunicamycin.</text>
</comment>
<comment type="subcellular location">
    <subcellularLocation>
        <location evidence="3">Cell membrane</location>
        <topology evidence="3">Multi-pass membrane protein</topology>
    </subcellularLocation>
</comment>
<comment type="similarity">
    <text evidence="3">Belongs to the glycosyltransferase 4 family.</text>
</comment>
<evidence type="ECO:0000250" key="1"/>
<evidence type="ECO:0000255" key="2"/>
<evidence type="ECO:0000305" key="3"/>
<keyword id="KW-1003">Cell membrane</keyword>
<keyword id="KW-0328">Glycosyltransferase</keyword>
<keyword id="KW-0472">Membrane</keyword>
<keyword id="KW-1185">Reference proteome</keyword>
<keyword id="KW-0808">Transferase</keyword>
<keyword id="KW-0812">Transmembrane</keyword>
<keyword id="KW-1133">Transmembrane helix</keyword>
<sequence>MLVSLLGILLSVIVGFVVTLISTKWVIGLCKKRGFTGKDINKLTKDDVPVLGGIGIVAGFVAGSFTFLLTSYNLSPGIENVVVSILLSSLIIGFLGLLDDIFNISQATRAFLPIFASIPLILYSVGHTIISIPFLGKVNFGILFYIIILPATLTITANAFNMLEGLNGLGAGMGLIMALALAYIGLKSGGTSFYAGIVSIILASVLFGFLIFNFYPAKTFPGNIGTYFIGSVIGSIGISGYMYTALFFLYLPYVIEFVLKAKTRFKGVSFGKIDDQGYLHWDSKPNSLTHIVMRIGKFKEYHIVLIIWGIEILFAILAVVFQTVTITI</sequence>
<accession>P39465</accession>
<accession>Q4JCF9</accession>
<dbReference type="EC" id="2.7.8.15"/>
<dbReference type="EMBL" id="D28748">
    <property type="protein sequence ID" value="BAA05941.1"/>
    <property type="molecule type" value="Genomic_DNA"/>
</dbReference>
<dbReference type="EMBL" id="CP000077">
    <property type="protein sequence ID" value="AAY79520.1"/>
    <property type="molecule type" value="Genomic_DNA"/>
</dbReference>
<dbReference type="PIR" id="B54058">
    <property type="entry name" value="B54058"/>
</dbReference>
<dbReference type="RefSeq" id="WP_011277021.1">
    <property type="nucleotide sequence ID" value="NC_007181.1"/>
</dbReference>
<dbReference type="SMR" id="P39465"/>
<dbReference type="STRING" id="330779.Saci_0093"/>
<dbReference type="DNASU" id="3473869"/>
<dbReference type="GeneID" id="14550624"/>
<dbReference type="KEGG" id="sai:Saci_0093"/>
<dbReference type="PATRIC" id="fig|330779.12.peg.88"/>
<dbReference type="eggNOG" id="arCOG03199">
    <property type="taxonomic scope" value="Archaea"/>
</dbReference>
<dbReference type="HOGENOM" id="CLU_023982_4_0_2"/>
<dbReference type="BRENDA" id="2.7.8.15">
    <property type="organism ID" value="6160"/>
</dbReference>
<dbReference type="Proteomes" id="UP000001018">
    <property type="component" value="Chromosome"/>
</dbReference>
<dbReference type="GO" id="GO:0005886">
    <property type="term" value="C:plasma membrane"/>
    <property type="evidence" value="ECO:0007669"/>
    <property type="project" value="UniProtKB-SubCell"/>
</dbReference>
<dbReference type="GO" id="GO:0016757">
    <property type="term" value="F:glycosyltransferase activity"/>
    <property type="evidence" value="ECO:0007669"/>
    <property type="project" value="UniProtKB-KW"/>
</dbReference>
<dbReference type="GO" id="GO:0003975">
    <property type="term" value="F:UDP-N-acetylglucosamine-dolichyl-phosphate N-acetylglucosaminephosphotransferase activity"/>
    <property type="evidence" value="ECO:0007669"/>
    <property type="project" value="UniProtKB-EC"/>
</dbReference>
<dbReference type="GO" id="GO:0044038">
    <property type="term" value="P:cell wall macromolecule biosynthetic process"/>
    <property type="evidence" value="ECO:0007669"/>
    <property type="project" value="TreeGrafter"/>
</dbReference>
<dbReference type="GO" id="GO:0071555">
    <property type="term" value="P:cell wall organization"/>
    <property type="evidence" value="ECO:0007669"/>
    <property type="project" value="TreeGrafter"/>
</dbReference>
<dbReference type="CDD" id="cd06856">
    <property type="entry name" value="GT_GPT_archaea"/>
    <property type="match status" value="1"/>
</dbReference>
<dbReference type="InterPro" id="IPR000715">
    <property type="entry name" value="Glycosyl_transferase_4"/>
</dbReference>
<dbReference type="PANTHER" id="PTHR22926">
    <property type="entry name" value="PHOSPHO-N-ACETYLMURAMOYL-PENTAPEPTIDE-TRANSFERASE"/>
    <property type="match status" value="1"/>
</dbReference>
<dbReference type="PANTHER" id="PTHR22926:SF3">
    <property type="entry name" value="UNDECAPRENYL-PHOSPHATE ALPHA-N-ACETYLGLUCOSAMINYL 1-PHOSPHATE TRANSFERASE"/>
    <property type="match status" value="1"/>
</dbReference>
<dbReference type="Pfam" id="PF00953">
    <property type="entry name" value="Glycos_transf_4"/>
    <property type="match status" value="1"/>
</dbReference>
<name>GPT_SULAC</name>
<protein>
    <recommendedName>
        <fullName>Putative UDP-N-acetylglucosamine--dolichyl-phosphate N-acetylglucosaminephosphotransferase</fullName>
        <ecNumber>2.7.8.15</ecNumber>
    </recommendedName>
    <alternativeName>
        <fullName>GlcNAc-1-P transferase</fullName>
        <shortName>G1PT</shortName>
        <shortName>GPT</shortName>
    </alternativeName>
    <alternativeName>
        <fullName>N-acetylglucosamine-1-phosphate transferase</fullName>
    </alternativeName>
</protein>
<reference key="1">
    <citation type="journal article" date="1994" name="J. Biol. Chem.">
        <title>Archaebacterial ether-linked lipid biosynthetic gene. Expression cloning, sequencing, and characterization of geranylgeranyl-diphosphate synthase.</title>
        <authorList>
            <person name="Ohnuma S."/>
            <person name="Suzuki M."/>
            <person name="Nishino T."/>
        </authorList>
    </citation>
    <scope>NUCLEOTIDE SEQUENCE [GENOMIC DNA]</scope>
    <source>
        <strain>ATCC 33909 / DSM 639 / JCM 8929 / NBRC 15157 / NCIMB 11770</strain>
    </source>
</reference>
<reference key="2">
    <citation type="journal article" date="2005" name="J. Bacteriol.">
        <title>The genome of Sulfolobus acidocaldarius, a model organism of the Crenarchaeota.</title>
        <authorList>
            <person name="Chen L."/>
            <person name="Bruegger K."/>
            <person name="Skovgaard M."/>
            <person name="Redder P."/>
            <person name="She Q."/>
            <person name="Torarinsson E."/>
            <person name="Greve B."/>
            <person name="Awayez M."/>
            <person name="Zibat A."/>
            <person name="Klenk H.-P."/>
            <person name="Garrett R.A."/>
        </authorList>
    </citation>
    <scope>NUCLEOTIDE SEQUENCE [LARGE SCALE GENOMIC DNA]</scope>
    <source>
        <strain>ATCC 33909 / DSM 639 / JCM 8929 / NBRC 15157 / NCIMB 11770</strain>
    </source>
</reference>
<organism>
    <name type="scientific">Sulfolobus acidocaldarius (strain ATCC 33909 / DSM 639 / JCM 8929 / NBRC 15157 / NCIMB 11770)</name>
    <dbReference type="NCBI Taxonomy" id="330779"/>
    <lineage>
        <taxon>Archaea</taxon>
        <taxon>Thermoproteota</taxon>
        <taxon>Thermoprotei</taxon>
        <taxon>Sulfolobales</taxon>
        <taxon>Sulfolobaceae</taxon>
        <taxon>Sulfolobus</taxon>
    </lineage>
</organism>
<feature type="chain" id="PRO_0000108766" description="Putative UDP-N-acetylglucosamine--dolichyl-phosphate N-acetylglucosaminephosphotransferase">
    <location>
        <begin position="1"/>
        <end position="328"/>
    </location>
</feature>
<feature type="transmembrane region" description="Helical" evidence="2">
    <location>
        <begin position="1"/>
        <end position="21"/>
    </location>
</feature>
<feature type="transmembrane region" description="Helical" evidence="2">
    <location>
        <begin position="48"/>
        <end position="68"/>
    </location>
</feature>
<feature type="transmembrane region" description="Helical" evidence="2">
    <location>
        <begin position="78"/>
        <end position="98"/>
    </location>
</feature>
<feature type="transmembrane region" description="Helical" evidence="2">
    <location>
        <begin position="107"/>
        <end position="127"/>
    </location>
</feature>
<feature type="transmembrane region" description="Helical" evidence="2">
    <location>
        <begin position="129"/>
        <end position="149"/>
    </location>
</feature>
<feature type="transmembrane region" description="Helical" evidence="2">
    <location>
        <begin position="166"/>
        <end position="186"/>
    </location>
</feature>
<feature type="transmembrane region" description="Helical" evidence="2">
    <location>
        <begin position="192"/>
        <end position="212"/>
    </location>
</feature>
<feature type="transmembrane region" description="Helical" evidence="2">
    <location>
        <begin position="228"/>
        <end position="248"/>
    </location>
</feature>
<feature type="transmembrane region" description="Helical" evidence="2">
    <location>
        <begin position="301"/>
        <end position="321"/>
    </location>
</feature>